<accession>O24708</accession>
<organism>
    <name type="scientific">Synechococcus sp. (strain ATCC 27144 / PCC 6301 / SAUG 1402/1)</name>
    <name type="common">Anacystis nidulans</name>
    <dbReference type="NCBI Taxonomy" id="269084"/>
    <lineage>
        <taxon>Bacteria</taxon>
        <taxon>Bacillati</taxon>
        <taxon>Cyanobacteriota</taxon>
        <taxon>Cyanophyceae</taxon>
        <taxon>Synechococcales</taxon>
        <taxon>Synechococcaceae</taxon>
        <taxon>Synechococcus</taxon>
    </lineage>
</organism>
<gene>
    <name evidence="1" type="primary">rpsM</name>
    <name evidence="1" type="synonym">rps13</name>
    <name type="ordered locus">syc1886_d</name>
</gene>
<proteinExistence type="inferred from homology"/>
<evidence type="ECO:0000255" key="1">
    <source>
        <dbReference type="HAMAP-Rule" id="MF_01315"/>
    </source>
</evidence>
<evidence type="ECO:0000256" key="2">
    <source>
        <dbReference type="SAM" id="MobiDB-lite"/>
    </source>
</evidence>
<evidence type="ECO:0000305" key="3"/>
<dbReference type="EMBL" id="AB000111">
    <property type="protein sequence ID" value="BAA22470.1"/>
    <property type="molecule type" value="Genomic_DNA"/>
</dbReference>
<dbReference type="EMBL" id="AP008231">
    <property type="protein sequence ID" value="BAD80076.1"/>
    <property type="molecule type" value="Genomic_DNA"/>
</dbReference>
<dbReference type="RefSeq" id="WP_011244196.1">
    <property type="nucleotide sequence ID" value="NZ_CP085785.1"/>
</dbReference>
<dbReference type="SMR" id="O24708"/>
<dbReference type="GeneID" id="72431094"/>
<dbReference type="KEGG" id="syc:syc1886_d"/>
<dbReference type="eggNOG" id="COG0099">
    <property type="taxonomic scope" value="Bacteria"/>
</dbReference>
<dbReference type="Proteomes" id="UP000001175">
    <property type="component" value="Chromosome"/>
</dbReference>
<dbReference type="GO" id="GO:0005829">
    <property type="term" value="C:cytosol"/>
    <property type="evidence" value="ECO:0007669"/>
    <property type="project" value="TreeGrafter"/>
</dbReference>
<dbReference type="GO" id="GO:0015935">
    <property type="term" value="C:small ribosomal subunit"/>
    <property type="evidence" value="ECO:0007669"/>
    <property type="project" value="TreeGrafter"/>
</dbReference>
<dbReference type="GO" id="GO:0019843">
    <property type="term" value="F:rRNA binding"/>
    <property type="evidence" value="ECO:0007669"/>
    <property type="project" value="UniProtKB-UniRule"/>
</dbReference>
<dbReference type="GO" id="GO:0003735">
    <property type="term" value="F:structural constituent of ribosome"/>
    <property type="evidence" value="ECO:0007669"/>
    <property type="project" value="InterPro"/>
</dbReference>
<dbReference type="GO" id="GO:0000049">
    <property type="term" value="F:tRNA binding"/>
    <property type="evidence" value="ECO:0007669"/>
    <property type="project" value="UniProtKB-UniRule"/>
</dbReference>
<dbReference type="GO" id="GO:0006412">
    <property type="term" value="P:translation"/>
    <property type="evidence" value="ECO:0007669"/>
    <property type="project" value="UniProtKB-UniRule"/>
</dbReference>
<dbReference type="FunFam" id="1.10.8.50:FF:000001">
    <property type="entry name" value="30S ribosomal protein S13"/>
    <property type="match status" value="1"/>
</dbReference>
<dbReference type="FunFam" id="4.10.910.10:FF:000001">
    <property type="entry name" value="30S ribosomal protein S13"/>
    <property type="match status" value="1"/>
</dbReference>
<dbReference type="Gene3D" id="1.10.8.50">
    <property type="match status" value="1"/>
</dbReference>
<dbReference type="Gene3D" id="4.10.910.10">
    <property type="entry name" value="30s ribosomal protein s13, domain 2"/>
    <property type="match status" value="1"/>
</dbReference>
<dbReference type="HAMAP" id="MF_01315">
    <property type="entry name" value="Ribosomal_uS13"/>
    <property type="match status" value="1"/>
</dbReference>
<dbReference type="InterPro" id="IPR027437">
    <property type="entry name" value="Rbsml_uS13_C"/>
</dbReference>
<dbReference type="InterPro" id="IPR001892">
    <property type="entry name" value="Ribosomal_uS13"/>
</dbReference>
<dbReference type="InterPro" id="IPR010979">
    <property type="entry name" value="Ribosomal_uS13-like_H2TH"/>
</dbReference>
<dbReference type="InterPro" id="IPR019980">
    <property type="entry name" value="Ribosomal_uS13_bac-type"/>
</dbReference>
<dbReference type="InterPro" id="IPR018269">
    <property type="entry name" value="Ribosomal_uS13_CS"/>
</dbReference>
<dbReference type="NCBIfam" id="TIGR03631">
    <property type="entry name" value="uS13_bact"/>
    <property type="match status" value="1"/>
</dbReference>
<dbReference type="PANTHER" id="PTHR10871">
    <property type="entry name" value="30S RIBOSOMAL PROTEIN S13/40S RIBOSOMAL PROTEIN S18"/>
    <property type="match status" value="1"/>
</dbReference>
<dbReference type="PANTHER" id="PTHR10871:SF1">
    <property type="entry name" value="SMALL RIBOSOMAL SUBUNIT PROTEIN US13M"/>
    <property type="match status" value="1"/>
</dbReference>
<dbReference type="Pfam" id="PF00416">
    <property type="entry name" value="Ribosomal_S13"/>
    <property type="match status" value="1"/>
</dbReference>
<dbReference type="PIRSF" id="PIRSF002134">
    <property type="entry name" value="Ribosomal_S13"/>
    <property type="match status" value="1"/>
</dbReference>
<dbReference type="SUPFAM" id="SSF46946">
    <property type="entry name" value="S13-like H2TH domain"/>
    <property type="match status" value="1"/>
</dbReference>
<dbReference type="PROSITE" id="PS00646">
    <property type="entry name" value="RIBOSOMAL_S13_1"/>
    <property type="match status" value="1"/>
</dbReference>
<dbReference type="PROSITE" id="PS50159">
    <property type="entry name" value="RIBOSOMAL_S13_2"/>
    <property type="match status" value="1"/>
</dbReference>
<feature type="chain" id="PRO_0000132156" description="Small ribosomal subunit protein uS13">
    <location>
        <begin position="1"/>
        <end position="125"/>
    </location>
</feature>
<feature type="region of interest" description="Disordered" evidence="2">
    <location>
        <begin position="93"/>
        <end position="125"/>
    </location>
</feature>
<feature type="compositionally biased region" description="Basic residues" evidence="2">
    <location>
        <begin position="101"/>
        <end position="125"/>
    </location>
</feature>
<name>RS13_SYNP6</name>
<reference key="1">
    <citation type="journal article" date="1997" name="Gene">
        <title>Organization of a large gene cluster encoding ribosomal proteins in the cyanobacterium Synechococcus sp. strain PCC 6301: comparison of gene clusters among cyanobacteria, eubacteria and chloroplast genomes.</title>
        <authorList>
            <person name="Sugita M."/>
            <person name="Sugishita H."/>
            <person name="Fujishiro T."/>
            <person name="Tsuboi M."/>
            <person name="Sugita C."/>
            <person name="Endo T."/>
            <person name="Sugiura M."/>
        </authorList>
    </citation>
    <scope>NUCLEOTIDE SEQUENCE [GENOMIC DNA]</scope>
</reference>
<reference key="2">
    <citation type="journal article" date="2007" name="Photosyn. Res.">
        <title>Complete nucleotide sequence of the freshwater unicellular cyanobacterium Synechococcus elongatus PCC 6301 chromosome: gene content and organization.</title>
        <authorList>
            <person name="Sugita C."/>
            <person name="Ogata K."/>
            <person name="Shikata M."/>
            <person name="Jikuya H."/>
            <person name="Takano J."/>
            <person name="Furumichi M."/>
            <person name="Kanehisa M."/>
            <person name="Omata T."/>
            <person name="Sugiura M."/>
            <person name="Sugita M."/>
        </authorList>
    </citation>
    <scope>NUCLEOTIDE SEQUENCE [LARGE SCALE GENOMIC DNA]</scope>
    <source>
        <strain>ATCC 27144 / PCC 6301 / SAUG 1402/1</strain>
    </source>
</reference>
<protein>
    <recommendedName>
        <fullName evidence="1">Small ribosomal subunit protein uS13</fullName>
    </recommendedName>
    <alternativeName>
        <fullName evidence="3">30S ribosomal protein S13</fullName>
    </alternativeName>
</protein>
<sequence length="125" mass="13979">MARIAGVDLPRDKRAEIGLTYIYGIGPTRAKEILAKTGVSPDTRIKDLNDSEVAALRQVVENDYQVEGDLRRLEAMSIKRLMDIGTVRGRRHRAGLPVRGQRTRTNARTRRGARKTVAGKKKATR</sequence>
<keyword id="KW-0687">Ribonucleoprotein</keyword>
<keyword id="KW-0689">Ribosomal protein</keyword>
<keyword id="KW-0694">RNA-binding</keyword>
<keyword id="KW-0699">rRNA-binding</keyword>
<keyword id="KW-0820">tRNA-binding</keyword>
<comment type="function">
    <text evidence="1">Located at the top of the head of the 30S subunit, it contacts several helices of the 16S rRNA. In the 70S ribosome it contacts the 23S rRNA (bridge B1a) and protein L5 of the 50S subunit (bridge B1b), connecting the 2 subunits; these bridges are implicated in subunit movement. Contacts the tRNAs in the A and P-sites.</text>
</comment>
<comment type="subunit">
    <text evidence="1">Part of the 30S ribosomal subunit. Forms a loose heterodimer with protein S19. Forms two bridges to the 50S subunit in the 70S ribosome.</text>
</comment>
<comment type="similarity">
    <text evidence="1">Belongs to the universal ribosomal protein uS13 family.</text>
</comment>